<dbReference type="EC" id="2.5.1.3" evidence="1"/>
<dbReference type="EMBL" id="CP000359">
    <property type="protein sequence ID" value="ABF46218.1"/>
    <property type="molecule type" value="Genomic_DNA"/>
</dbReference>
<dbReference type="RefSeq" id="WP_011531045.1">
    <property type="nucleotide sequence ID" value="NC_008025.1"/>
</dbReference>
<dbReference type="SMR" id="Q1IX16"/>
<dbReference type="STRING" id="319795.Dgeo_1923"/>
<dbReference type="KEGG" id="dge:Dgeo_1923"/>
<dbReference type="eggNOG" id="COG0352">
    <property type="taxonomic scope" value="Bacteria"/>
</dbReference>
<dbReference type="HOGENOM" id="CLU_018272_3_0_0"/>
<dbReference type="UniPathway" id="UPA00060">
    <property type="reaction ID" value="UER00141"/>
</dbReference>
<dbReference type="Proteomes" id="UP000002431">
    <property type="component" value="Chromosome"/>
</dbReference>
<dbReference type="GO" id="GO:0005737">
    <property type="term" value="C:cytoplasm"/>
    <property type="evidence" value="ECO:0007669"/>
    <property type="project" value="TreeGrafter"/>
</dbReference>
<dbReference type="GO" id="GO:0000287">
    <property type="term" value="F:magnesium ion binding"/>
    <property type="evidence" value="ECO:0007669"/>
    <property type="project" value="UniProtKB-UniRule"/>
</dbReference>
<dbReference type="GO" id="GO:0004789">
    <property type="term" value="F:thiamine-phosphate diphosphorylase activity"/>
    <property type="evidence" value="ECO:0007669"/>
    <property type="project" value="UniProtKB-UniRule"/>
</dbReference>
<dbReference type="GO" id="GO:0009228">
    <property type="term" value="P:thiamine biosynthetic process"/>
    <property type="evidence" value="ECO:0007669"/>
    <property type="project" value="UniProtKB-KW"/>
</dbReference>
<dbReference type="GO" id="GO:0009229">
    <property type="term" value="P:thiamine diphosphate biosynthetic process"/>
    <property type="evidence" value="ECO:0007669"/>
    <property type="project" value="UniProtKB-UniRule"/>
</dbReference>
<dbReference type="CDD" id="cd00564">
    <property type="entry name" value="TMP_TenI"/>
    <property type="match status" value="1"/>
</dbReference>
<dbReference type="Gene3D" id="3.20.20.70">
    <property type="entry name" value="Aldolase class I"/>
    <property type="match status" value="1"/>
</dbReference>
<dbReference type="HAMAP" id="MF_00097">
    <property type="entry name" value="TMP_synthase"/>
    <property type="match status" value="1"/>
</dbReference>
<dbReference type="InterPro" id="IPR013785">
    <property type="entry name" value="Aldolase_TIM"/>
</dbReference>
<dbReference type="InterPro" id="IPR036206">
    <property type="entry name" value="ThiamineP_synth_sf"/>
</dbReference>
<dbReference type="InterPro" id="IPR022998">
    <property type="entry name" value="ThiamineP_synth_TenI"/>
</dbReference>
<dbReference type="InterPro" id="IPR034291">
    <property type="entry name" value="TMP_synthase"/>
</dbReference>
<dbReference type="NCBIfam" id="TIGR00693">
    <property type="entry name" value="thiE"/>
    <property type="match status" value="1"/>
</dbReference>
<dbReference type="PANTHER" id="PTHR20857">
    <property type="entry name" value="THIAMINE-PHOSPHATE PYROPHOSPHORYLASE"/>
    <property type="match status" value="1"/>
</dbReference>
<dbReference type="PANTHER" id="PTHR20857:SF15">
    <property type="entry name" value="THIAMINE-PHOSPHATE SYNTHASE"/>
    <property type="match status" value="1"/>
</dbReference>
<dbReference type="Pfam" id="PF02581">
    <property type="entry name" value="TMP-TENI"/>
    <property type="match status" value="1"/>
</dbReference>
<dbReference type="SUPFAM" id="SSF51391">
    <property type="entry name" value="Thiamin phosphate synthase"/>
    <property type="match status" value="1"/>
</dbReference>
<name>THIE_DEIGD</name>
<feature type="chain" id="PRO_0000336389" description="Thiamine-phosphate synthase">
    <location>
        <begin position="1"/>
        <end position="221"/>
    </location>
</feature>
<feature type="binding site" evidence="1">
    <location>
        <begin position="39"/>
        <end position="43"/>
    </location>
    <ligand>
        <name>4-amino-2-methyl-5-(diphosphooxymethyl)pyrimidine</name>
        <dbReference type="ChEBI" id="CHEBI:57841"/>
    </ligand>
</feature>
<feature type="binding site" evidence="1">
    <location>
        <position position="76"/>
    </location>
    <ligand>
        <name>4-amino-2-methyl-5-(diphosphooxymethyl)pyrimidine</name>
        <dbReference type="ChEBI" id="CHEBI:57841"/>
    </ligand>
</feature>
<feature type="binding site" evidence="1">
    <location>
        <position position="77"/>
    </location>
    <ligand>
        <name>Mg(2+)</name>
        <dbReference type="ChEBI" id="CHEBI:18420"/>
    </ligand>
</feature>
<feature type="binding site" evidence="1">
    <location>
        <position position="96"/>
    </location>
    <ligand>
        <name>Mg(2+)</name>
        <dbReference type="ChEBI" id="CHEBI:18420"/>
    </ligand>
</feature>
<feature type="binding site" evidence="1">
    <location>
        <position position="114"/>
    </location>
    <ligand>
        <name>4-amino-2-methyl-5-(diphosphooxymethyl)pyrimidine</name>
        <dbReference type="ChEBI" id="CHEBI:57841"/>
    </ligand>
</feature>
<feature type="binding site" evidence="1">
    <location>
        <begin position="140"/>
        <end position="142"/>
    </location>
    <ligand>
        <name>2-[(2R,5Z)-2-carboxy-4-methylthiazol-5(2H)-ylidene]ethyl phosphate</name>
        <dbReference type="ChEBI" id="CHEBI:62899"/>
    </ligand>
</feature>
<feature type="binding site" evidence="1">
    <location>
        <position position="143"/>
    </location>
    <ligand>
        <name>4-amino-2-methyl-5-(diphosphooxymethyl)pyrimidine</name>
        <dbReference type="ChEBI" id="CHEBI:57841"/>
    </ligand>
</feature>
<feature type="binding site" evidence="1">
    <location>
        <position position="171"/>
    </location>
    <ligand>
        <name>2-[(2R,5Z)-2-carboxy-4-methylthiazol-5(2H)-ylidene]ethyl phosphate</name>
        <dbReference type="ChEBI" id="CHEBI:62899"/>
    </ligand>
</feature>
<comment type="function">
    <text evidence="1">Condenses 4-methyl-5-(beta-hydroxyethyl)thiazole monophosphate (THZ-P) and 2-methyl-4-amino-5-hydroxymethyl pyrimidine pyrophosphate (HMP-PP) to form thiamine monophosphate (TMP).</text>
</comment>
<comment type="catalytic activity">
    <reaction evidence="1">
        <text>2-[(2R,5Z)-2-carboxy-4-methylthiazol-5(2H)-ylidene]ethyl phosphate + 4-amino-2-methyl-5-(diphosphooxymethyl)pyrimidine + 2 H(+) = thiamine phosphate + CO2 + diphosphate</text>
        <dbReference type="Rhea" id="RHEA:47844"/>
        <dbReference type="ChEBI" id="CHEBI:15378"/>
        <dbReference type="ChEBI" id="CHEBI:16526"/>
        <dbReference type="ChEBI" id="CHEBI:33019"/>
        <dbReference type="ChEBI" id="CHEBI:37575"/>
        <dbReference type="ChEBI" id="CHEBI:57841"/>
        <dbReference type="ChEBI" id="CHEBI:62899"/>
        <dbReference type="EC" id="2.5.1.3"/>
    </reaction>
</comment>
<comment type="catalytic activity">
    <reaction evidence="1">
        <text>2-(2-carboxy-4-methylthiazol-5-yl)ethyl phosphate + 4-amino-2-methyl-5-(diphosphooxymethyl)pyrimidine + 2 H(+) = thiamine phosphate + CO2 + diphosphate</text>
        <dbReference type="Rhea" id="RHEA:47848"/>
        <dbReference type="ChEBI" id="CHEBI:15378"/>
        <dbReference type="ChEBI" id="CHEBI:16526"/>
        <dbReference type="ChEBI" id="CHEBI:33019"/>
        <dbReference type="ChEBI" id="CHEBI:37575"/>
        <dbReference type="ChEBI" id="CHEBI:57841"/>
        <dbReference type="ChEBI" id="CHEBI:62890"/>
        <dbReference type="EC" id="2.5.1.3"/>
    </reaction>
</comment>
<comment type="catalytic activity">
    <reaction evidence="1">
        <text>4-methyl-5-(2-phosphooxyethyl)-thiazole + 4-amino-2-methyl-5-(diphosphooxymethyl)pyrimidine + H(+) = thiamine phosphate + diphosphate</text>
        <dbReference type="Rhea" id="RHEA:22328"/>
        <dbReference type="ChEBI" id="CHEBI:15378"/>
        <dbReference type="ChEBI" id="CHEBI:33019"/>
        <dbReference type="ChEBI" id="CHEBI:37575"/>
        <dbReference type="ChEBI" id="CHEBI:57841"/>
        <dbReference type="ChEBI" id="CHEBI:58296"/>
        <dbReference type="EC" id="2.5.1.3"/>
    </reaction>
</comment>
<comment type="cofactor">
    <cofactor evidence="1">
        <name>Mg(2+)</name>
        <dbReference type="ChEBI" id="CHEBI:18420"/>
    </cofactor>
    <text evidence="1">Binds 1 Mg(2+) ion per subunit.</text>
</comment>
<comment type="pathway">
    <text evidence="1">Cofactor biosynthesis; thiamine diphosphate biosynthesis; thiamine phosphate from 4-amino-2-methyl-5-diphosphomethylpyrimidine and 4-methyl-5-(2-phosphoethyl)-thiazole: step 1/1.</text>
</comment>
<comment type="similarity">
    <text evidence="1">Belongs to the thiamine-phosphate synthase family.</text>
</comment>
<sequence length="221" mass="23290">MSRSLGRLYLVATPRPDQPEAEFLARVEAALDGGVDTLQLRCKAGSPQYGEARPYIALARRVGALAQARDVPFFVNDRVDVALASGADGVHLGQDDLPAEWARRLAPGLQIGLSTHSPEQAARAQAEHPTYFAVGPVYATPTKPGRAAAGLAYVRHVAALCPAVPWYAIGGVDLSTVDDVVAAGATRVAVVRAVLDAPDPARAAADLLARLPDAWEARVCR</sequence>
<protein>
    <recommendedName>
        <fullName evidence="1">Thiamine-phosphate synthase</fullName>
        <shortName evidence="1">TP synthase</shortName>
        <shortName evidence="1">TPS</shortName>
        <ecNumber evidence="1">2.5.1.3</ecNumber>
    </recommendedName>
    <alternativeName>
        <fullName evidence="1">Thiamine-phosphate pyrophosphorylase</fullName>
        <shortName evidence="1">TMP pyrophosphorylase</shortName>
        <shortName evidence="1">TMP-PPase</shortName>
    </alternativeName>
</protein>
<evidence type="ECO:0000255" key="1">
    <source>
        <dbReference type="HAMAP-Rule" id="MF_00097"/>
    </source>
</evidence>
<organism>
    <name type="scientific">Deinococcus geothermalis (strain DSM 11300 / CIP 105573 / AG-3a)</name>
    <dbReference type="NCBI Taxonomy" id="319795"/>
    <lineage>
        <taxon>Bacteria</taxon>
        <taxon>Thermotogati</taxon>
        <taxon>Deinococcota</taxon>
        <taxon>Deinococci</taxon>
        <taxon>Deinococcales</taxon>
        <taxon>Deinococcaceae</taxon>
        <taxon>Deinococcus</taxon>
    </lineage>
</organism>
<accession>Q1IX16</accession>
<reference key="1">
    <citation type="submission" date="2006-04" db="EMBL/GenBank/DDBJ databases">
        <title>Complete sequence of chromosome of Deinococcus geothermalis DSM 11300.</title>
        <authorList>
            <person name="Copeland A."/>
            <person name="Lucas S."/>
            <person name="Lapidus A."/>
            <person name="Barry K."/>
            <person name="Detter J.C."/>
            <person name="Glavina del Rio T."/>
            <person name="Hammon N."/>
            <person name="Israni S."/>
            <person name="Dalin E."/>
            <person name="Tice H."/>
            <person name="Pitluck S."/>
            <person name="Brettin T."/>
            <person name="Bruce D."/>
            <person name="Han C."/>
            <person name="Tapia R."/>
            <person name="Saunders E."/>
            <person name="Gilna P."/>
            <person name="Schmutz J."/>
            <person name="Larimer F."/>
            <person name="Land M."/>
            <person name="Hauser L."/>
            <person name="Kyrpides N."/>
            <person name="Kim E."/>
            <person name="Daly M.J."/>
            <person name="Fredrickson J.K."/>
            <person name="Makarova K.S."/>
            <person name="Gaidamakova E.K."/>
            <person name="Zhai M."/>
            <person name="Richardson P."/>
        </authorList>
    </citation>
    <scope>NUCLEOTIDE SEQUENCE [LARGE SCALE GENOMIC DNA]</scope>
    <source>
        <strain>DSM 11300 / CIP 105573 / AG-3a</strain>
    </source>
</reference>
<keyword id="KW-0460">Magnesium</keyword>
<keyword id="KW-0479">Metal-binding</keyword>
<keyword id="KW-0784">Thiamine biosynthesis</keyword>
<keyword id="KW-0808">Transferase</keyword>
<gene>
    <name evidence="1" type="primary">thiE</name>
    <name type="ordered locus">Dgeo_1923</name>
</gene>
<proteinExistence type="inferred from homology"/>